<dbReference type="EC" id="1.5.1.5" evidence="1"/>
<dbReference type="EC" id="3.5.4.9" evidence="1"/>
<dbReference type="EMBL" id="AE017126">
    <property type="protein sequence ID" value="AAQ00175.1"/>
    <property type="molecule type" value="Genomic_DNA"/>
</dbReference>
<dbReference type="RefSeq" id="NP_875522.1">
    <property type="nucleotide sequence ID" value="NC_005042.1"/>
</dbReference>
<dbReference type="RefSeq" id="WP_011125282.1">
    <property type="nucleotide sequence ID" value="NC_005042.1"/>
</dbReference>
<dbReference type="SMR" id="Q7TVA3"/>
<dbReference type="STRING" id="167539.Pro_1130"/>
<dbReference type="EnsemblBacteria" id="AAQ00175">
    <property type="protein sequence ID" value="AAQ00175"/>
    <property type="gene ID" value="Pro_1130"/>
</dbReference>
<dbReference type="KEGG" id="pma:Pro_1130"/>
<dbReference type="PATRIC" id="fig|167539.5.peg.1182"/>
<dbReference type="eggNOG" id="COG0190">
    <property type="taxonomic scope" value="Bacteria"/>
</dbReference>
<dbReference type="HOGENOM" id="CLU_034045_2_1_3"/>
<dbReference type="OrthoDB" id="9803580at2"/>
<dbReference type="UniPathway" id="UPA00193"/>
<dbReference type="Proteomes" id="UP000001420">
    <property type="component" value="Chromosome"/>
</dbReference>
<dbReference type="GO" id="GO:0005829">
    <property type="term" value="C:cytosol"/>
    <property type="evidence" value="ECO:0007669"/>
    <property type="project" value="TreeGrafter"/>
</dbReference>
<dbReference type="GO" id="GO:0004477">
    <property type="term" value="F:methenyltetrahydrofolate cyclohydrolase activity"/>
    <property type="evidence" value="ECO:0007669"/>
    <property type="project" value="UniProtKB-UniRule"/>
</dbReference>
<dbReference type="GO" id="GO:0004488">
    <property type="term" value="F:methylenetetrahydrofolate dehydrogenase (NADP+) activity"/>
    <property type="evidence" value="ECO:0007669"/>
    <property type="project" value="UniProtKB-UniRule"/>
</dbReference>
<dbReference type="GO" id="GO:0000105">
    <property type="term" value="P:L-histidine biosynthetic process"/>
    <property type="evidence" value="ECO:0007669"/>
    <property type="project" value="UniProtKB-KW"/>
</dbReference>
<dbReference type="GO" id="GO:0009086">
    <property type="term" value="P:methionine biosynthetic process"/>
    <property type="evidence" value="ECO:0007669"/>
    <property type="project" value="UniProtKB-KW"/>
</dbReference>
<dbReference type="GO" id="GO:0006164">
    <property type="term" value="P:purine nucleotide biosynthetic process"/>
    <property type="evidence" value="ECO:0007669"/>
    <property type="project" value="UniProtKB-KW"/>
</dbReference>
<dbReference type="GO" id="GO:0035999">
    <property type="term" value="P:tetrahydrofolate interconversion"/>
    <property type="evidence" value="ECO:0007669"/>
    <property type="project" value="UniProtKB-UniRule"/>
</dbReference>
<dbReference type="CDD" id="cd01080">
    <property type="entry name" value="NAD_bind_m-THF_DH_Cyclohyd"/>
    <property type="match status" value="1"/>
</dbReference>
<dbReference type="FunFam" id="3.40.50.720:FF:000006">
    <property type="entry name" value="Bifunctional protein FolD"/>
    <property type="match status" value="1"/>
</dbReference>
<dbReference type="FunFam" id="3.40.50.10860:FF:000005">
    <property type="entry name" value="C-1-tetrahydrofolate synthase, cytoplasmic, putative"/>
    <property type="match status" value="1"/>
</dbReference>
<dbReference type="Gene3D" id="3.40.50.10860">
    <property type="entry name" value="Leucine Dehydrogenase, chain A, domain 1"/>
    <property type="match status" value="1"/>
</dbReference>
<dbReference type="Gene3D" id="3.40.50.720">
    <property type="entry name" value="NAD(P)-binding Rossmann-like Domain"/>
    <property type="match status" value="1"/>
</dbReference>
<dbReference type="HAMAP" id="MF_01576">
    <property type="entry name" value="THF_DHG_CYH"/>
    <property type="match status" value="1"/>
</dbReference>
<dbReference type="InterPro" id="IPR046346">
    <property type="entry name" value="Aminoacid_DH-like_N_sf"/>
</dbReference>
<dbReference type="InterPro" id="IPR036291">
    <property type="entry name" value="NAD(P)-bd_dom_sf"/>
</dbReference>
<dbReference type="InterPro" id="IPR000672">
    <property type="entry name" value="THF_DH/CycHdrlase"/>
</dbReference>
<dbReference type="InterPro" id="IPR020630">
    <property type="entry name" value="THF_DH/CycHdrlase_cat_dom"/>
</dbReference>
<dbReference type="InterPro" id="IPR020867">
    <property type="entry name" value="THF_DH/CycHdrlase_CS"/>
</dbReference>
<dbReference type="InterPro" id="IPR020631">
    <property type="entry name" value="THF_DH/CycHdrlase_NAD-bd_dom"/>
</dbReference>
<dbReference type="NCBIfam" id="NF010783">
    <property type="entry name" value="PRK14186.1"/>
    <property type="match status" value="1"/>
</dbReference>
<dbReference type="PANTHER" id="PTHR48099:SF5">
    <property type="entry name" value="C-1-TETRAHYDROFOLATE SYNTHASE, CYTOPLASMIC"/>
    <property type="match status" value="1"/>
</dbReference>
<dbReference type="PANTHER" id="PTHR48099">
    <property type="entry name" value="C-1-TETRAHYDROFOLATE SYNTHASE, CYTOPLASMIC-RELATED"/>
    <property type="match status" value="1"/>
</dbReference>
<dbReference type="Pfam" id="PF00763">
    <property type="entry name" value="THF_DHG_CYH"/>
    <property type="match status" value="1"/>
</dbReference>
<dbReference type="Pfam" id="PF02882">
    <property type="entry name" value="THF_DHG_CYH_C"/>
    <property type="match status" value="1"/>
</dbReference>
<dbReference type="PRINTS" id="PR00085">
    <property type="entry name" value="THFDHDRGNASE"/>
</dbReference>
<dbReference type="SUPFAM" id="SSF53223">
    <property type="entry name" value="Aminoacid dehydrogenase-like, N-terminal domain"/>
    <property type="match status" value="1"/>
</dbReference>
<dbReference type="SUPFAM" id="SSF51735">
    <property type="entry name" value="NAD(P)-binding Rossmann-fold domains"/>
    <property type="match status" value="1"/>
</dbReference>
<dbReference type="PROSITE" id="PS00766">
    <property type="entry name" value="THF_DHG_CYH_1"/>
    <property type="match status" value="1"/>
</dbReference>
<dbReference type="PROSITE" id="PS00767">
    <property type="entry name" value="THF_DHG_CYH_2"/>
    <property type="match status" value="1"/>
</dbReference>
<organism>
    <name type="scientific">Prochlorococcus marinus (strain SARG / CCMP1375 / SS120)</name>
    <dbReference type="NCBI Taxonomy" id="167539"/>
    <lineage>
        <taxon>Bacteria</taxon>
        <taxon>Bacillati</taxon>
        <taxon>Cyanobacteriota</taxon>
        <taxon>Cyanophyceae</taxon>
        <taxon>Synechococcales</taxon>
        <taxon>Prochlorococcaceae</taxon>
        <taxon>Prochlorococcus</taxon>
    </lineage>
</organism>
<gene>
    <name evidence="1" type="primary">folD</name>
    <name type="ordered locus">Pro_1130</name>
</gene>
<keyword id="KW-0028">Amino-acid biosynthesis</keyword>
<keyword id="KW-0368">Histidine biosynthesis</keyword>
<keyword id="KW-0378">Hydrolase</keyword>
<keyword id="KW-0486">Methionine biosynthesis</keyword>
<keyword id="KW-0511">Multifunctional enzyme</keyword>
<keyword id="KW-0521">NADP</keyword>
<keyword id="KW-0554">One-carbon metabolism</keyword>
<keyword id="KW-0560">Oxidoreductase</keyword>
<keyword id="KW-0658">Purine biosynthesis</keyword>
<keyword id="KW-1185">Reference proteome</keyword>
<proteinExistence type="inferred from homology"/>
<comment type="function">
    <text evidence="1">Catalyzes the oxidation of 5,10-methylenetetrahydrofolate to 5,10-methenyltetrahydrofolate and then the hydrolysis of 5,10-methenyltetrahydrofolate to 10-formyltetrahydrofolate.</text>
</comment>
<comment type="catalytic activity">
    <reaction evidence="1">
        <text>(6R)-5,10-methylene-5,6,7,8-tetrahydrofolate + NADP(+) = (6R)-5,10-methenyltetrahydrofolate + NADPH</text>
        <dbReference type="Rhea" id="RHEA:22812"/>
        <dbReference type="ChEBI" id="CHEBI:15636"/>
        <dbReference type="ChEBI" id="CHEBI:57455"/>
        <dbReference type="ChEBI" id="CHEBI:57783"/>
        <dbReference type="ChEBI" id="CHEBI:58349"/>
        <dbReference type="EC" id="1.5.1.5"/>
    </reaction>
</comment>
<comment type="catalytic activity">
    <reaction evidence="1">
        <text>(6R)-5,10-methenyltetrahydrofolate + H2O = (6R)-10-formyltetrahydrofolate + H(+)</text>
        <dbReference type="Rhea" id="RHEA:23700"/>
        <dbReference type="ChEBI" id="CHEBI:15377"/>
        <dbReference type="ChEBI" id="CHEBI:15378"/>
        <dbReference type="ChEBI" id="CHEBI:57455"/>
        <dbReference type="ChEBI" id="CHEBI:195366"/>
        <dbReference type="EC" id="3.5.4.9"/>
    </reaction>
</comment>
<comment type="pathway">
    <text evidence="1">One-carbon metabolism; tetrahydrofolate interconversion.</text>
</comment>
<comment type="subunit">
    <text evidence="1">Homodimer.</text>
</comment>
<comment type="similarity">
    <text evidence="1">Belongs to the tetrahydrofolate dehydrogenase/cyclohydrolase family.</text>
</comment>
<sequence>MTNILDGKKLAKELELRLHEDITEFSPEVGRPPGLAVIRVGDDPASGIYVSNKEKACNRIGLDSFLYHLGTNTSEQEILEVIKALNNDQKVDGILLQLPLPKGLDAEPLLKAIDPEKDVDGLHTLNLGRLLKGEKGPRSCTPAGIMVLLRRNNISLVGKKVVVIGRSILVGKPMALMLQAANATVTVAHSKTINLPEITNQAEVLIVAAGIPQLIGLEHVRSNAVVVDVGIHRIPMEPLKLTGSNYKLCGDVRAEEIYSKIKAITPVPGGVGPMTVAMLMVNTVNRWQYHCGLSSTLSDLLP</sequence>
<evidence type="ECO:0000255" key="1">
    <source>
        <dbReference type="HAMAP-Rule" id="MF_01576"/>
    </source>
</evidence>
<name>FOLD_PROMA</name>
<protein>
    <recommendedName>
        <fullName evidence="1">Bifunctional protein FolD</fullName>
    </recommendedName>
    <domain>
        <recommendedName>
            <fullName evidence="1">Methylenetetrahydrofolate dehydrogenase</fullName>
            <ecNumber evidence="1">1.5.1.5</ecNumber>
        </recommendedName>
    </domain>
    <domain>
        <recommendedName>
            <fullName evidence="1">Methenyltetrahydrofolate cyclohydrolase</fullName>
            <ecNumber evidence="1">3.5.4.9</ecNumber>
        </recommendedName>
    </domain>
</protein>
<accession>Q7TVA3</accession>
<reference key="1">
    <citation type="journal article" date="2003" name="Proc. Natl. Acad. Sci. U.S.A.">
        <title>Genome sequence of the cyanobacterium Prochlorococcus marinus SS120, a nearly minimal oxyphototrophic genome.</title>
        <authorList>
            <person name="Dufresne A."/>
            <person name="Salanoubat M."/>
            <person name="Partensky F."/>
            <person name="Artiguenave F."/>
            <person name="Axmann I.M."/>
            <person name="Barbe V."/>
            <person name="Duprat S."/>
            <person name="Galperin M.Y."/>
            <person name="Koonin E.V."/>
            <person name="Le Gall F."/>
            <person name="Makarova K.S."/>
            <person name="Ostrowski M."/>
            <person name="Oztas S."/>
            <person name="Robert C."/>
            <person name="Rogozin I.B."/>
            <person name="Scanlan D.J."/>
            <person name="Tandeau de Marsac N."/>
            <person name="Weissenbach J."/>
            <person name="Wincker P."/>
            <person name="Wolf Y.I."/>
            <person name="Hess W.R."/>
        </authorList>
    </citation>
    <scope>NUCLEOTIDE SEQUENCE [LARGE SCALE GENOMIC DNA]</scope>
    <source>
        <strain>SARG / CCMP1375 / SS120</strain>
    </source>
</reference>
<feature type="chain" id="PRO_0000268434" description="Bifunctional protein FolD">
    <location>
        <begin position="1"/>
        <end position="302"/>
    </location>
</feature>
<feature type="binding site" evidence="1">
    <location>
        <begin position="165"/>
        <end position="167"/>
    </location>
    <ligand>
        <name>NADP(+)</name>
        <dbReference type="ChEBI" id="CHEBI:58349"/>
    </ligand>
</feature>
<feature type="binding site" evidence="1">
    <location>
        <position position="190"/>
    </location>
    <ligand>
        <name>NADP(+)</name>
        <dbReference type="ChEBI" id="CHEBI:58349"/>
    </ligand>
</feature>
<feature type="binding site" evidence="1">
    <location>
        <position position="231"/>
    </location>
    <ligand>
        <name>NADP(+)</name>
        <dbReference type="ChEBI" id="CHEBI:58349"/>
    </ligand>
</feature>